<accession>Q3C1N3</accession>
<keyword id="KW-0150">Chloroplast</keyword>
<keyword id="KW-0934">Plastid</keyword>
<keyword id="KW-1185">Reference proteome</keyword>
<proteinExistence type="uncertain"/>
<feature type="chain" id="PRO_0000299586" description="Putative uncharacterized protein ycf15">
    <location>
        <begin position="1"/>
        <end position="87"/>
    </location>
</feature>
<comment type="subcellular location">
    <subcellularLocation>
        <location>Plastid</location>
        <location>Chloroplast</location>
    </subcellularLocation>
</comment>
<comment type="similarity">
    <text evidence="1">Belongs to the ycf15 family.</text>
</comment>
<comment type="caution">
    <text evidence="1">Could be the product of a pseudogene.</text>
</comment>
<name>YCF15_NICSY</name>
<geneLocation type="chloroplast"/>
<evidence type="ECO:0000305" key="1"/>
<protein>
    <recommendedName>
        <fullName>Putative uncharacterized protein ycf15</fullName>
    </recommendedName>
</protein>
<reference key="1">
    <citation type="journal article" date="2006" name="Mol. Genet. Genomics">
        <title>The chloroplast genome of Nicotiana sylvestris and Nicotiana tomentosiformis: complete sequencing confirms that the Nicotiana sylvestris progenitor is the maternal genome donor of Nicotiana tabacum.</title>
        <authorList>
            <person name="Yukawa M."/>
            <person name="Tsudzuki T."/>
            <person name="Sugiura M."/>
        </authorList>
    </citation>
    <scope>NUCLEOTIDE SEQUENCE [LARGE SCALE GENOMIC DNA]</scope>
</reference>
<dbReference type="EMBL" id="AB237912">
    <property type="protein sequence ID" value="BAE46699.1"/>
    <property type="molecule type" value="Genomic_DNA"/>
</dbReference>
<dbReference type="EMBL" id="AB237912">
    <property type="protein sequence ID" value="BAE46732.1"/>
    <property type="molecule type" value="Genomic_DNA"/>
</dbReference>
<dbReference type="Proteomes" id="UP000189701">
    <property type="component" value="Unplaced"/>
</dbReference>
<dbReference type="GO" id="GO:0009507">
    <property type="term" value="C:chloroplast"/>
    <property type="evidence" value="ECO:0007669"/>
    <property type="project" value="UniProtKB-SubCell"/>
</dbReference>
<dbReference type="InterPro" id="IPR019645">
    <property type="entry name" value="Uncharacterised_Ycf15"/>
</dbReference>
<dbReference type="Pfam" id="PF10705">
    <property type="entry name" value="Ycf15"/>
    <property type="match status" value="1"/>
</dbReference>
<sequence>METLVSSIFWTLAPWKNMLLLKHGRIEILDQNTMYGWYELPKQEFLNSKQPVQIFTTKKYWILFRIGPERRRKAGMPTGVYYIEFTR</sequence>
<organism>
    <name type="scientific">Nicotiana sylvestris</name>
    <name type="common">Wood tobacco</name>
    <name type="synonym">South American tobacco</name>
    <dbReference type="NCBI Taxonomy" id="4096"/>
    <lineage>
        <taxon>Eukaryota</taxon>
        <taxon>Viridiplantae</taxon>
        <taxon>Streptophyta</taxon>
        <taxon>Embryophyta</taxon>
        <taxon>Tracheophyta</taxon>
        <taxon>Spermatophyta</taxon>
        <taxon>Magnoliopsida</taxon>
        <taxon>eudicotyledons</taxon>
        <taxon>Gunneridae</taxon>
        <taxon>Pentapetalae</taxon>
        <taxon>asterids</taxon>
        <taxon>lamiids</taxon>
        <taxon>Solanales</taxon>
        <taxon>Solanaceae</taxon>
        <taxon>Nicotianoideae</taxon>
        <taxon>Nicotianeae</taxon>
        <taxon>Nicotiana</taxon>
    </lineage>
</organism>
<gene>
    <name type="primary">ycf15-A</name>
</gene>
<gene>
    <name type="primary">ycf15-B</name>
</gene>